<evidence type="ECO:0000255" key="1">
    <source>
        <dbReference type="HAMAP-Rule" id="MF_00012"/>
    </source>
</evidence>
<organism>
    <name type="scientific">Symbiobacterium thermophilum (strain DSM 24528 / JCM 14929 / IAM 14863 / T)</name>
    <dbReference type="NCBI Taxonomy" id="292459"/>
    <lineage>
        <taxon>Bacteria</taxon>
        <taxon>Bacillati</taxon>
        <taxon>Bacillota</taxon>
        <taxon>Clostridia</taxon>
        <taxon>Eubacteriales</taxon>
        <taxon>Symbiobacteriaceae</taxon>
        <taxon>Symbiobacterium</taxon>
    </lineage>
</organism>
<gene>
    <name evidence="1" type="primary">ilvD</name>
    <name type="ordered locus">STH2685</name>
</gene>
<protein>
    <recommendedName>
        <fullName evidence="1">Dihydroxy-acid dehydratase</fullName>
        <shortName evidence="1">DAD</shortName>
        <ecNumber evidence="1">4.2.1.9</ecNumber>
    </recommendedName>
</protein>
<name>ILVD_SYMTH</name>
<proteinExistence type="inferred from homology"/>
<sequence>MEGSTVRSDLIKKGPDRAPHRALLKATGVTDADMGKPFIGIANSYIDIVPGHVHLKEFGDLVKEAVREAGGVPFIFNTIGVDDGIAMGHIGMRYSLPSRELIADAVETVIEAHQLDALICIPNCDKITPGMLMAAMRVNIPTIFISGGPMAAGRLKDGRRADLITIFEGVGAHSRGMISDEELKELEDLACPSCGSCSGMFTANSMNCLCEALGLALPGNGTALARSAEREALARAAARRIVEMALAGGPRPRDIVTPEAIDNAFALDIAMGGSTNTVLHTLAVATEAGIAYPLERINALSARVPYLCKVSPATAEVHIEDVHAAGGVMAILKELSRKEGTLHPHCLTVTGKTIGELWAEAENRNREVIRPVEDPYAETGGLAILFGNLAPDGAALKVGAVDPSITTFTGRAICFDSQDEALQGIFGGRVQPGHVVVIRYEGPKGGPGMPEMLAPTSAIVGMGLGKEVALITDGRFSGGTRGICLGHISPEAAEGGPIALVRDGDVITIDIPGRRLTLEVPADELERRRAAWVKPAPKVRKGWLGRYAALVTSANTGAVLRTPEE</sequence>
<comment type="function">
    <text evidence="1">Functions in the biosynthesis of branched-chain amino acids. Catalyzes the dehydration of (2R,3R)-2,3-dihydroxy-3-methylpentanoate (2,3-dihydroxy-3-methylvalerate) into 2-oxo-3-methylpentanoate (2-oxo-3-methylvalerate) and of (2R)-2,3-dihydroxy-3-methylbutanoate (2,3-dihydroxyisovalerate) into 2-oxo-3-methylbutanoate (2-oxoisovalerate), the penultimate precursor to L-isoleucine and L-valine, respectively.</text>
</comment>
<comment type="catalytic activity">
    <reaction evidence="1">
        <text>(2R)-2,3-dihydroxy-3-methylbutanoate = 3-methyl-2-oxobutanoate + H2O</text>
        <dbReference type="Rhea" id="RHEA:24809"/>
        <dbReference type="ChEBI" id="CHEBI:11851"/>
        <dbReference type="ChEBI" id="CHEBI:15377"/>
        <dbReference type="ChEBI" id="CHEBI:49072"/>
        <dbReference type="EC" id="4.2.1.9"/>
    </reaction>
    <physiologicalReaction direction="left-to-right" evidence="1">
        <dbReference type="Rhea" id="RHEA:24810"/>
    </physiologicalReaction>
</comment>
<comment type="catalytic activity">
    <reaction evidence="1">
        <text>(2R,3R)-2,3-dihydroxy-3-methylpentanoate = (S)-3-methyl-2-oxopentanoate + H2O</text>
        <dbReference type="Rhea" id="RHEA:27694"/>
        <dbReference type="ChEBI" id="CHEBI:15377"/>
        <dbReference type="ChEBI" id="CHEBI:35146"/>
        <dbReference type="ChEBI" id="CHEBI:49258"/>
        <dbReference type="EC" id="4.2.1.9"/>
    </reaction>
    <physiologicalReaction direction="left-to-right" evidence="1">
        <dbReference type="Rhea" id="RHEA:27695"/>
    </physiologicalReaction>
</comment>
<comment type="cofactor">
    <cofactor evidence="1">
        <name>[2Fe-2S] cluster</name>
        <dbReference type="ChEBI" id="CHEBI:190135"/>
    </cofactor>
    <text evidence="1">Binds 1 [2Fe-2S] cluster per subunit. This cluster acts as a Lewis acid cofactor.</text>
</comment>
<comment type="cofactor">
    <cofactor evidence="1">
        <name>Mg(2+)</name>
        <dbReference type="ChEBI" id="CHEBI:18420"/>
    </cofactor>
</comment>
<comment type="pathway">
    <text evidence="1">Amino-acid biosynthesis; L-isoleucine biosynthesis; L-isoleucine from 2-oxobutanoate: step 3/4.</text>
</comment>
<comment type="pathway">
    <text evidence="1">Amino-acid biosynthesis; L-valine biosynthesis; L-valine from pyruvate: step 3/4.</text>
</comment>
<comment type="subunit">
    <text evidence="1">Homodimer.</text>
</comment>
<comment type="similarity">
    <text evidence="1">Belongs to the IlvD/Edd family.</text>
</comment>
<reference key="1">
    <citation type="journal article" date="2004" name="Nucleic Acids Res.">
        <title>Genome sequence of Symbiobacterium thermophilum, an uncultivable bacterium that depends on microbial commensalism.</title>
        <authorList>
            <person name="Ueda K."/>
            <person name="Yamashita A."/>
            <person name="Ishikawa J."/>
            <person name="Shimada M."/>
            <person name="Watsuji T."/>
            <person name="Morimura K."/>
            <person name="Ikeda H."/>
            <person name="Hattori M."/>
            <person name="Beppu T."/>
        </authorList>
    </citation>
    <scope>NUCLEOTIDE SEQUENCE [LARGE SCALE GENOMIC DNA]</scope>
    <source>
        <strain>DSM 24528 / JCM 14929 / IAM 14863 / T</strain>
    </source>
</reference>
<keyword id="KW-0001">2Fe-2S</keyword>
<keyword id="KW-0028">Amino-acid biosynthesis</keyword>
<keyword id="KW-0100">Branched-chain amino acid biosynthesis</keyword>
<keyword id="KW-0408">Iron</keyword>
<keyword id="KW-0411">Iron-sulfur</keyword>
<keyword id="KW-0456">Lyase</keyword>
<keyword id="KW-0460">Magnesium</keyword>
<keyword id="KW-0479">Metal-binding</keyword>
<keyword id="KW-1185">Reference proteome</keyword>
<dbReference type="EC" id="4.2.1.9" evidence="1"/>
<dbReference type="EMBL" id="AP006840">
    <property type="protein sequence ID" value="BAD41670.1"/>
    <property type="molecule type" value="Genomic_DNA"/>
</dbReference>
<dbReference type="SMR" id="Q67KX6"/>
<dbReference type="STRING" id="292459.STH2685"/>
<dbReference type="KEGG" id="sth:STH2685"/>
<dbReference type="eggNOG" id="COG0129">
    <property type="taxonomic scope" value="Bacteria"/>
</dbReference>
<dbReference type="HOGENOM" id="CLU_014271_4_2_9"/>
<dbReference type="OrthoDB" id="9807077at2"/>
<dbReference type="UniPathway" id="UPA00047">
    <property type="reaction ID" value="UER00057"/>
</dbReference>
<dbReference type="UniPathway" id="UPA00049">
    <property type="reaction ID" value="UER00061"/>
</dbReference>
<dbReference type="Proteomes" id="UP000000417">
    <property type="component" value="Chromosome"/>
</dbReference>
<dbReference type="GO" id="GO:0005829">
    <property type="term" value="C:cytosol"/>
    <property type="evidence" value="ECO:0007669"/>
    <property type="project" value="TreeGrafter"/>
</dbReference>
<dbReference type="GO" id="GO:0051537">
    <property type="term" value="F:2 iron, 2 sulfur cluster binding"/>
    <property type="evidence" value="ECO:0007669"/>
    <property type="project" value="UniProtKB-UniRule"/>
</dbReference>
<dbReference type="GO" id="GO:0004160">
    <property type="term" value="F:dihydroxy-acid dehydratase activity"/>
    <property type="evidence" value="ECO:0007669"/>
    <property type="project" value="UniProtKB-UniRule"/>
</dbReference>
<dbReference type="GO" id="GO:0000287">
    <property type="term" value="F:magnesium ion binding"/>
    <property type="evidence" value="ECO:0007669"/>
    <property type="project" value="UniProtKB-UniRule"/>
</dbReference>
<dbReference type="GO" id="GO:0009097">
    <property type="term" value="P:isoleucine biosynthetic process"/>
    <property type="evidence" value="ECO:0007669"/>
    <property type="project" value="UniProtKB-UniRule"/>
</dbReference>
<dbReference type="GO" id="GO:0009099">
    <property type="term" value="P:L-valine biosynthetic process"/>
    <property type="evidence" value="ECO:0007669"/>
    <property type="project" value="UniProtKB-UniRule"/>
</dbReference>
<dbReference type="FunFam" id="3.50.30.80:FF:000001">
    <property type="entry name" value="Dihydroxy-acid dehydratase"/>
    <property type="match status" value="1"/>
</dbReference>
<dbReference type="Gene3D" id="3.50.30.80">
    <property type="entry name" value="IlvD/EDD C-terminal domain-like"/>
    <property type="match status" value="1"/>
</dbReference>
<dbReference type="HAMAP" id="MF_00012">
    <property type="entry name" value="IlvD"/>
    <property type="match status" value="1"/>
</dbReference>
<dbReference type="InterPro" id="IPR042096">
    <property type="entry name" value="Dihydro-acid_dehy_C"/>
</dbReference>
<dbReference type="InterPro" id="IPR004404">
    <property type="entry name" value="DihydroxyA_deHydtase"/>
</dbReference>
<dbReference type="InterPro" id="IPR020558">
    <property type="entry name" value="DiOHA_6PGluconate_deHydtase_CS"/>
</dbReference>
<dbReference type="InterPro" id="IPR056740">
    <property type="entry name" value="ILV_EDD_C"/>
</dbReference>
<dbReference type="InterPro" id="IPR000581">
    <property type="entry name" value="ILV_EDD_N"/>
</dbReference>
<dbReference type="InterPro" id="IPR037237">
    <property type="entry name" value="IlvD/EDD_N"/>
</dbReference>
<dbReference type="NCBIfam" id="TIGR00110">
    <property type="entry name" value="ilvD"/>
    <property type="match status" value="1"/>
</dbReference>
<dbReference type="NCBIfam" id="NF002068">
    <property type="entry name" value="PRK00911.1"/>
    <property type="match status" value="1"/>
</dbReference>
<dbReference type="PANTHER" id="PTHR43661">
    <property type="entry name" value="D-XYLONATE DEHYDRATASE"/>
    <property type="match status" value="1"/>
</dbReference>
<dbReference type="PANTHER" id="PTHR43661:SF3">
    <property type="entry name" value="D-XYLONATE DEHYDRATASE YAGF-RELATED"/>
    <property type="match status" value="1"/>
</dbReference>
<dbReference type="Pfam" id="PF24877">
    <property type="entry name" value="ILV_EDD_C"/>
    <property type="match status" value="1"/>
</dbReference>
<dbReference type="Pfam" id="PF00920">
    <property type="entry name" value="ILVD_EDD_N"/>
    <property type="match status" value="1"/>
</dbReference>
<dbReference type="SUPFAM" id="SSF143975">
    <property type="entry name" value="IlvD/EDD N-terminal domain-like"/>
    <property type="match status" value="1"/>
</dbReference>
<dbReference type="SUPFAM" id="SSF52016">
    <property type="entry name" value="LeuD/IlvD-like"/>
    <property type="match status" value="1"/>
</dbReference>
<dbReference type="PROSITE" id="PS00886">
    <property type="entry name" value="ILVD_EDD_1"/>
    <property type="match status" value="1"/>
</dbReference>
<dbReference type="PROSITE" id="PS00887">
    <property type="entry name" value="ILVD_EDD_2"/>
    <property type="match status" value="1"/>
</dbReference>
<feature type="chain" id="PRO_0000225430" description="Dihydroxy-acid dehydratase">
    <location>
        <begin position="1"/>
        <end position="565"/>
    </location>
</feature>
<feature type="active site" description="Proton acceptor" evidence="1">
    <location>
        <position position="477"/>
    </location>
</feature>
<feature type="binding site" evidence="1">
    <location>
        <position position="83"/>
    </location>
    <ligand>
        <name>Mg(2+)</name>
        <dbReference type="ChEBI" id="CHEBI:18420"/>
    </ligand>
</feature>
<feature type="binding site" evidence="1">
    <location>
        <position position="124"/>
    </location>
    <ligand>
        <name>[2Fe-2S] cluster</name>
        <dbReference type="ChEBI" id="CHEBI:190135"/>
    </ligand>
</feature>
<feature type="binding site" evidence="1">
    <location>
        <position position="125"/>
    </location>
    <ligand>
        <name>Mg(2+)</name>
        <dbReference type="ChEBI" id="CHEBI:18420"/>
    </ligand>
</feature>
<feature type="binding site" description="via carbamate group" evidence="1">
    <location>
        <position position="126"/>
    </location>
    <ligand>
        <name>Mg(2+)</name>
        <dbReference type="ChEBI" id="CHEBI:18420"/>
    </ligand>
</feature>
<feature type="binding site" evidence="1">
    <location>
        <position position="197"/>
    </location>
    <ligand>
        <name>[2Fe-2S] cluster</name>
        <dbReference type="ChEBI" id="CHEBI:190135"/>
    </ligand>
</feature>
<feature type="binding site" evidence="1">
    <location>
        <position position="451"/>
    </location>
    <ligand>
        <name>Mg(2+)</name>
        <dbReference type="ChEBI" id="CHEBI:18420"/>
    </ligand>
</feature>
<feature type="modified residue" description="N6-carboxylysine" evidence="1">
    <location>
        <position position="126"/>
    </location>
</feature>
<accession>Q67KX6</accession>